<comment type="function">
    <text evidence="1">Catalyzes the specific phosphorylation of 1,6-anhydro-N-acetylmuramic acid (anhMurNAc) with the simultaneous cleavage of the 1,6-anhydro ring, generating MurNAc-6-P. Is required for the utilization of anhMurNAc either imported from the medium or derived from its own cell wall murein, and thus plays a role in cell wall recycling.</text>
</comment>
<comment type="catalytic activity">
    <reaction evidence="1">
        <text>1,6-anhydro-N-acetyl-beta-muramate + ATP + H2O = N-acetyl-D-muramate 6-phosphate + ADP + H(+)</text>
        <dbReference type="Rhea" id="RHEA:24952"/>
        <dbReference type="ChEBI" id="CHEBI:15377"/>
        <dbReference type="ChEBI" id="CHEBI:15378"/>
        <dbReference type="ChEBI" id="CHEBI:30616"/>
        <dbReference type="ChEBI" id="CHEBI:58690"/>
        <dbReference type="ChEBI" id="CHEBI:58722"/>
        <dbReference type="ChEBI" id="CHEBI:456216"/>
        <dbReference type="EC" id="2.7.1.170"/>
    </reaction>
</comment>
<comment type="pathway">
    <text evidence="1">Amino-sugar metabolism; 1,6-anhydro-N-acetylmuramate degradation.</text>
</comment>
<comment type="pathway">
    <text evidence="1">Cell wall biogenesis; peptidoglycan recycling.</text>
</comment>
<comment type="similarity">
    <text evidence="1">Belongs to the anhydro-N-acetylmuramic acid kinase family.</text>
</comment>
<feature type="chain" id="PRO_1000140149" description="Anhydro-N-acetylmuramic acid kinase">
    <location>
        <begin position="1"/>
        <end position="369"/>
    </location>
</feature>
<feature type="binding site" evidence="1">
    <location>
        <begin position="12"/>
        <end position="19"/>
    </location>
    <ligand>
        <name>ATP</name>
        <dbReference type="ChEBI" id="CHEBI:30616"/>
    </ligand>
</feature>
<reference key="1">
    <citation type="submission" date="2008-06" db="EMBL/GenBank/DDBJ databases">
        <title>Genome and proteome analysis of A. pleuropneumoniae serotype 7.</title>
        <authorList>
            <person name="Linke B."/>
            <person name="Buettner F."/>
            <person name="Martinez-Arias R."/>
            <person name="Goesmann A."/>
            <person name="Baltes N."/>
            <person name="Tegetmeyer H."/>
            <person name="Singh M."/>
            <person name="Gerlach G.F."/>
        </authorList>
    </citation>
    <scope>NUCLEOTIDE SEQUENCE [LARGE SCALE GENOMIC DNA]</scope>
    <source>
        <strain>AP76</strain>
    </source>
</reference>
<sequence length="369" mass="40653">MTKNLYLGVMSGTSLDGVDLCVMDFAKNPPKLTACGFTPMPEDLRTDLSHLLKSRETSLQKLGEIDHRLGLLYAESIKRFLAEHHLSASDIQAIGCHGQTVWHSPNGNFPFTMQIGDMNLVAAHTGITTIADFRRKDMAVGGQGAPLVPAFHEGIFASQERLTVVLNIGGISNISVLTPQQPTIGYDVSVGNALMDSWIELHQAKRYDKNAEWAKTGKLIPTLLDSLLDEPFFKLPAPKSTGRELFNLEWLAKKSANLTAYRPEDVQRTLAEFTAQSVVNELKTLESEKQCLLLVCGGGARNPLLMQRFSELLPKWQVATTDEYGLDIDYVEAAAFAWLAYQRVHNLTSNLPSVTGAKQPVSLGVIYPK</sequence>
<proteinExistence type="inferred from homology"/>
<name>ANMK_ACTP7</name>
<accession>B3GYL7</accession>
<evidence type="ECO:0000255" key="1">
    <source>
        <dbReference type="HAMAP-Rule" id="MF_01270"/>
    </source>
</evidence>
<dbReference type="EC" id="2.7.1.170" evidence="1"/>
<dbReference type="EMBL" id="CP001091">
    <property type="protein sequence ID" value="ACE62248.1"/>
    <property type="molecule type" value="Genomic_DNA"/>
</dbReference>
<dbReference type="RefSeq" id="WP_005617998.1">
    <property type="nucleotide sequence ID" value="NC_010939.1"/>
</dbReference>
<dbReference type="SMR" id="B3GYL7"/>
<dbReference type="KEGG" id="apa:APP7_1596"/>
<dbReference type="HOGENOM" id="CLU_038782_0_0_6"/>
<dbReference type="UniPathway" id="UPA00343"/>
<dbReference type="UniPathway" id="UPA00544"/>
<dbReference type="Proteomes" id="UP000001226">
    <property type="component" value="Chromosome"/>
</dbReference>
<dbReference type="GO" id="GO:0005524">
    <property type="term" value="F:ATP binding"/>
    <property type="evidence" value="ECO:0007669"/>
    <property type="project" value="UniProtKB-UniRule"/>
</dbReference>
<dbReference type="GO" id="GO:0016301">
    <property type="term" value="F:kinase activity"/>
    <property type="evidence" value="ECO:0007669"/>
    <property type="project" value="UniProtKB-KW"/>
</dbReference>
<dbReference type="GO" id="GO:0016773">
    <property type="term" value="F:phosphotransferase activity, alcohol group as acceptor"/>
    <property type="evidence" value="ECO:0007669"/>
    <property type="project" value="UniProtKB-UniRule"/>
</dbReference>
<dbReference type="GO" id="GO:0097175">
    <property type="term" value="P:1,6-anhydro-N-acetyl-beta-muramic acid catabolic process"/>
    <property type="evidence" value="ECO:0007669"/>
    <property type="project" value="UniProtKB-UniRule"/>
</dbReference>
<dbReference type="GO" id="GO:0006040">
    <property type="term" value="P:amino sugar metabolic process"/>
    <property type="evidence" value="ECO:0007669"/>
    <property type="project" value="InterPro"/>
</dbReference>
<dbReference type="GO" id="GO:0009254">
    <property type="term" value="P:peptidoglycan turnover"/>
    <property type="evidence" value="ECO:0007669"/>
    <property type="project" value="UniProtKB-UniRule"/>
</dbReference>
<dbReference type="CDD" id="cd24050">
    <property type="entry name" value="ASKHA_NBD_ANMK"/>
    <property type="match status" value="1"/>
</dbReference>
<dbReference type="Gene3D" id="3.30.420.40">
    <property type="match status" value="2"/>
</dbReference>
<dbReference type="HAMAP" id="MF_01270">
    <property type="entry name" value="AnhMurNAc_kinase"/>
    <property type="match status" value="1"/>
</dbReference>
<dbReference type="InterPro" id="IPR005338">
    <property type="entry name" value="Anhydro_N_Ac-Mur_kinase"/>
</dbReference>
<dbReference type="InterPro" id="IPR043129">
    <property type="entry name" value="ATPase_NBD"/>
</dbReference>
<dbReference type="NCBIfam" id="NF007139">
    <property type="entry name" value="PRK09585.1-3"/>
    <property type="match status" value="1"/>
</dbReference>
<dbReference type="PANTHER" id="PTHR30605">
    <property type="entry name" value="ANHYDRO-N-ACETYLMURAMIC ACID KINASE"/>
    <property type="match status" value="1"/>
</dbReference>
<dbReference type="PANTHER" id="PTHR30605:SF0">
    <property type="entry name" value="ANHYDRO-N-ACETYLMURAMIC ACID KINASE"/>
    <property type="match status" value="1"/>
</dbReference>
<dbReference type="Pfam" id="PF03702">
    <property type="entry name" value="AnmK"/>
    <property type="match status" value="1"/>
</dbReference>
<dbReference type="SUPFAM" id="SSF53067">
    <property type="entry name" value="Actin-like ATPase domain"/>
    <property type="match status" value="1"/>
</dbReference>
<organism>
    <name type="scientific">Actinobacillus pleuropneumoniae serotype 7 (strain AP76)</name>
    <dbReference type="NCBI Taxonomy" id="537457"/>
    <lineage>
        <taxon>Bacteria</taxon>
        <taxon>Pseudomonadati</taxon>
        <taxon>Pseudomonadota</taxon>
        <taxon>Gammaproteobacteria</taxon>
        <taxon>Pasteurellales</taxon>
        <taxon>Pasteurellaceae</taxon>
        <taxon>Actinobacillus</taxon>
    </lineage>
</organism>
<keyword id="KW-0067">ATP-binding</keyword>
<keyword id="KW-0119">Carbohydrate metabolism</keyword>
<keyword id="KW-0418">Kinase</keyword>
<keyword id="KW-0547">Nucleotide-binding</keyword>
<keyword id="KW-0808">Transferase</keyword>
<protein>
    <recommendedName>
        <fullName evidence="1">Anhydro-N-acetylmuramic acid kinase</fullName>
        <ecNumber evidence="1">2.7.1.170</ecNumber>
    </recommendedName>
    <alternativeName>
        <fullName evidence="1">AnhMurNAc kinase</fullName>
    </alternativeName>
</protein>
<gene>
    <name evidence="1" type="primary">anmK</name>
    <name type="ordered locus">APP7_1596</name>
</gene>